<dbReference type="EC" id="4.2.3.-" evidence="3"/>
<dbReference type="EMBL" id="MF990004">
    <property type="protein sequence ID" value="AVK70105.1"/>
    <property type="molecule type" value="Genomic_DNA"/>
</dbReference>
<dbReference type="EMBL" id="MH388470">
    <property type="protein sequence ID" value="QBC75443.1"/>
    <property type="molecule type" value="Genomic_DNA"/>
</dbReference>
<dbReference type="UniPathway" id="UPA00213"/>
<dbReference type="GO" id="GO:0016020">
    <property type="term" value="C:membrane"/>
    <property type="evidence" value="ECO:0007669"/>
    <property type="project" value="UniProtKB-SubCell"/>
</dbReference>
<dbReference type="GO" id="GO:0016829">
    <property type="term" value="F:lyase activity"/>
    <property type="evidence" value="ECO:0007669"/>
    <property type="project" value="UniProtKB-KW"/>
</dbReference>
<dbReference type="GO" id="GO:0016114">
    <property type="term" value="P:terpenoid biosynthetic process"/>
    <property type="evidence" value="ECO:0007669"/>
    <property type="project" value="UniProtKB-UniPathway"/>
</dbReference>
<dbReference type="InterPro" id="IPR039020">
    <property type="entry name" value="PaxB-like"/>
</dbReference>
<dbReference type="PANTHER" id="PTHR42038">
    <property type="match status" value="1"/>
</dbReference>
<dbReference type="PANTHER" id="PTHR42038:SF2">
    <property type="entry name" value="TERPENE CYCLASE AUSL"/>
    <property type="match status" value="1"/>
</dbReference>
<dbReference type="Pfam" id="PF25129">
    <property type="entry name" value="Pyr4-TMTC"/>
    <property type="match status" value="1"/>
</dbReference>
<organism>
    <name type="scientific">Penicillium terrestre</name>
    <dbReference type="NCBI Taxonomy" id="374132"/>
    <lineage>
        <taxon>Eukaryota</taxon>
        <taxon>Fungi</taxon>
        <taxon>Dikarya</taxon>
        <taxon>Ascomycota</taxon>
        <taxon>Pezizomycotina</taxon>
        <taxon>Eurotiomycetes</taxon>
        <taxon>Eurotiomycetidae</taxon>
        <taxon>Eurotiales</taxon>
        <taxon>Aspergillaceae</taxon>
        <taxon>Penicillium</taxon>
    </lineage>
</organism>
<comment type="function">
    <text evidence="1 3">Terpene cyclase; part of the gene cluster that mediates the biosynthesis of macrophorins, isoprenoid epoxycyclohexenones containing cyclized drimane moieties (PubMed:28926261). The first step of the pathway is the synthesis of 6-methylsalicylic acid (6-MSA) by the polyketide synthase macA (PubMed:28926261). 6-MSA is then converted to m-cresol by the decarboxylase macB (By similarity). The cytochrome P450 monooxygenase macC then catalyzes the oxidation of m-cresol to toluquinol (By similarity). Epoxidation of toluquinol is then performed by the short chain dehydrogenase macD, with the help of macE, and a further prenylation by macG leads to 7-deacetoxyyanuthone A (By similarity). The next step is the hydroxylation of C-22 of 7-deacetoxyyanuthone A by the cytochrome P450 monooxygenase macH to yield 22-deacetylyanuthone A (By similarity). O-Mevalon transferase macI then attaches mevalon to the hydroxyl group of 22-deacetylyanuthone A to produce yanuthone E (By similarity). The terpene cyclase macJ catalyzes the cyclization of 22-deacetylyanuthone A to macrophorin A (PubMed:28926261). MacJ is also able to catalyze cyclization of yanuthone E and 7-deacetoxyyanuthone A to their corresponding macrophorins (PubMed:28926261). The macJ products can be further modified by macH and macJ, as well as by the FAD-dependent monooxygenase macF, to produce additional macrophorins, including 4'-oxomacrophorin A, 4'-oxomacrophorin D and 4'-oxomacrophorin E (PubMed:28926261).</text>
</comment>
<comment type="pathway">
    <text evidence="3">Secondary metabolite biosynthesis; terpenoid biosynthesis.</text>
</comment>
<comment type="subcellular location">
    <subcellularLocation>
        <location evidence="2">Membrane</location>
        <topology evidence="2">Multi-pass membrane protein</topology>
    </subcellularLocation>
</comment>
<comment type="disruption phenotype">
    <text evidence="3">Abolishes completely the production of macrophorin A, 4'-oxomacrophorin A, 4'-oxomacrophorin D and 4'-oxomacrophorin E; and leads to the accumulation of yanuthone E, 7-deacetoxyyanuthone A, and 22-deacetylyanuthone A.</text>
</comment>
<comment type="miscellaneous">
    <text evidence="3">The macrophorins cluster contains a single gene insertion (encoding for the terpene cyclase macJ) compared with the yanuthone cluster that produces the linear compound yanuthone.</text>
</comment>
<comment type="similarity">
    <text evidence="5">Belongs to the paxB family.</text>
</comment>
<sequence length="258" mass="29359">MCFFALEEWAAANRDYENTPAPYWHVKSVPDGFTAISGILWSISYILMAKKAFKDRSYAMPLHCLCLNITWEAVYGFVYGPGLLNQVVFAQWMIVDVVLFYAILRSAPYAWKQSPLVAQHLAGIIVVGCVICLWLHLAIAATFIPSIGRQVVFMTAWPMQVLINFSSIAQLLSRGNTLGHSWGIWWTRMLGTIAAACCFFWRIHYWPERFGYAWTPYGKFLLLGSIGSDMVYAAVYVYVQRIEKQLDSLVNTKAQKAR</sequence>
<reference key="1">
    <citation type="journal article" date="2017" name="Org. Lett.">
        <title>Late-stage terpene cyclization by an integral membrane cyclase in the biosynthesis of isoprenoid epoxycyclohexenone natural products.</title>
        <authorList>
            <person name="Tang M.C."/>
            <person name="Cui X."/>
            <person name="He X."/>
            <person name="Ding Z."/>
            <person name="Zhu T."/>
            <person name="Tang Y."/>
            <person name="Li D."/>
        </authorList>
    </citation>
    <scope>NUCLEOTIDE SEQUENCE [GENOMIC DNA]</scope>
    <scope>FUNCTION</scope>
    <scope>CATALYTIC ACTIVITY</scope>
    <scope>DISRUPTION PHENOTYPE</scope>
    <scope>PATHWAY</scope>
    <scope>MUTAGENESIS OF ASP-31; ASP-55; GLU-72; ASP-96 AND ASP-229</scope>
    <source>
        <strain>LM2</strain>
    </source>
</reference>
<name>MACJ_PENTR</name>
<proteinExistence type="evidence at protein level"/>
<keyword id="KW-0456">Lyase</keyword>
<keyword id="KW-0472">Membrane</keyword>
<keyword id="KW-0812">Transmembrane</keyword>
<keyword id="KW-1133">Transmembrane helix</keyword>
<accession>A0A2P1DP74</accession>
<gene>
    <name evidence="4" type="primary">macJ</name>
</gene>
<evidence type="ECO:0000250" key="1">
    <source>
        <dbReference type="UniProtKB" id="G3Y419"/>
    </source>
</evidence>
<evidence type="ECO:0000255" key="2"/>
<evidence type="ECO:0000269" key="3">
    <source>
    </source>
</evidence>
<evidence type="ECO:0000303" key="4">
    <source>
    </source>
</evidence>
<evidence type="ECO:0000305" key="5"/>
<feature type="chain" id="PRO_0000454092" description="Terpene cyclase macJ">
    <location>
        <begin position="1"/>
        <end position="258"/>
    </location>
</feature>
<feature type="transmembrane region" description="Helical" evidence="2">
    <location>
        <begin position="29"/>
        <end position="49"/>
    </location>
</feature>
<feature type="transmembrane region" description="Helical" evidence="2">
    <location>
        <begin position="58"/>
        <end position="78"/>
    </location>
</feature>
<feature type="transmembrane region" description="Helical" evidence="2">
    <location>
        <begin position="83"/>
        <end position="103"/>
    </location>
</feature>
<feature type="transmembrane region" description="Helical" evidence="2">
    <location>
        <begin position="124"/>
        <end position="144"/>
    </location>
</feature>
<feature type="transmembrane region" description="Helical" evidence="2">
    <location>
        <begin position="151"/>
        <end position="171"/>
    </location>
</feature>
<feature type="transmembrane region" description="Helical" evidence="2">
    <location>
        <begin position="181"/>
        <end position="201"/>
    </location>
</feature>
<feature type="transmembrane region" description="Helical" evidence="2">
    <location>
        <begin position="220"/>
        <end position="240"/>
    </location>
</feature>
<feature type="mutagenesis site" description="Does not affect cyclase activity." evidence="3">
    <original>D</original>
    <variation>A</variation>
    <location>
        <position position="31"/>
    </location>
</feature>
<feature type="mutagenesis site" description="Does not affect cyclase activity." evidence="3">
    <original>D</original>
    <variation>A</variation>
    <location>
        <position position="55"/>
    </location>
</feature>
<feature type="mutagenesis site" description="Completely abolishes cyclase activity." evidence="3">
    <original>E</original>
    <variation>A</variation>
    <location>
        <position position="72"/>
    </location>
</feature>
<feature type="mutagenesis site" description="Completely abolishes cyclase activity." evidence="3">
    <original>D</original>
    <variation>A</variation>
    <location>
        <position position="96"/>
    </location>
</feature>
<feature type="mutagenesis site" description="Completely abolishes cyclase activity." evidence="3">
    <original>D</original>
    <variation>A</variation>
    <location>
        <position position="229"/>
    </location>
</feature>
<protein>
    <recommendedName>
        <fullName evidence="4">Terpene cyclase macJ</fullName>
        <ecNumber evidence="3">4.2.3.-</ecNumber>
    </recommendedName>
    <alternativeName>
        <fullName evidence="4">Macrophorins biosynthesis cluster protein J</fullName>
    </alternativeName>
</protein>